<accession>Q7VSY9</accession>
<name>HIS7_BORPE</name>
<protein>
    <recommendedName>
        <fullName evidence="1">Imidazoleglycerol-phosphate dehydratase</fullName>
        <shortName evidence="1">IGPD</shortName>
        <ecNumber evidence="1">4.2.1.19</ecNumber>
    </recommendedName>
</protein>
<keyword id="KW-0028">Amino-acid biosynthesis</keyword>
<keyword id="KW-0963">Cytoplasm</keyword>
<keyword id="KW-0368">Histidine biosynthesis</keyword>
<keyword id="KW-0456">Lyase</keyword>
<keyword id="KW-1185">Reference proteome</keyword>
<proteinExistence type="inferred from homology"/>
<sequence length="195" mass="21580">MRTAEITRNTNETRIRVAVNLDGTGKQTIDTGVPFLDHMLDQIARHGLIDLDIKADGDLHIDAHHTVEDVGITLGMAIAKAVGSKAGLRRYGHAYVPLDEALSRVVIDFSGRPGLEYHIDFTRARIGDFDVDLTREFFQGLVNHALMTLHIDNLRGFNAHHQCETVFKAFGRALRMALEVDPRMGDAVPSTKGVL</sequence>
<reference key="1">
    <citation type="journal article" date="2003" name="Nat. Genet.">
        <title>Comparative analysis of the genome sequences of Bordetella pertussis, Bordetella parapertussis and Bordetella bronchiseptica.</title>
        <authorList>
            <person name="Parkhill J."/>
            <person name="Sebaihia M."/>
            <person name="Preston A."/>
            <person name="Murphy L.D."/>
            <person name="Thomson N.R."/>
            <person name="Harris D.E."/>
            <person name="Holden M.T.G."/>
            <person name="Churcher C.M."/>
            <person name="Bentley S.D."/>
            <person name="Mungall K.L."/>
            <person name="Cerdeno-Tarraga A.-M."/>
            <person name="Temple L."/>
            <person name="James K.D."/>
            <person name="Harris B."/>
            <person name="Quail M.A."/>
            <person name="Achtman M."/>
            <person name="Atkin R."/>
            <person name="Baker S."/>
            <person name="Basham D."/>
            <person name="Bason N."/>
            <person name="Cherevach I."/>
            <person name="Chillingworth T."/>
            <person name="Collins M."/>
            <person name="Cronin A."/>
            <person name="Davis P."/>
            <person name="Doggett J."/>
            <person name="Feltwell T."/>
            <person name="Goble A."/>
            <person name="Hamlin N."/>
            <person name="Hauser H."/>
            <person name="Holroyd S."/>
            <person name="Jagels K."/>
            <person name="Leather S."/>
            <person name="Moule S."/>
            <person name="Norberczak H."/>
            <person name="O'Neil S."/>
            <person name="Ormond D."/>
            <person name="Price C."/>
            <person name="Rabbinowitsch E."/>
            <person name="Rutter S."/>
            <person name="Sanders M."/>
            <person name="Saunders D."/>
            <person name="Seeger K."/>
            <person name="Sharp S."/>
            <person name="Simmonds M."/>
            <person name="Skelton J."/>
            <person name="Squares R."/>
            <person name="Squares S."/>
            <person name="Stevens K."/>
            <person name="Unwin L."/>
            <person name="Whitehead S."/>
            <person name="Barrell B.G."/>
            <person name="Maskell D.J."/>
        </authorList>
    </citation>
    <scope>NUCLEOTIDE SEQUENCE [LARGE SCALE GENOMIC DNA]</scope>
    <source>
        <strain>Tohama I / ATCC BAA-589 / NCTC 13251</strain>
    </source>
</reference>
<evidence type="ECO:0000255" key="1">
    <source>
        <dbReference type="HAMAP-Rule" id="MF_00076"/>
    </source>
</evidence>
<evidence type="ECO:0000305" key="2"/>
<dbReference type="EC" id="4.2.1.19" evidence="1"/>
<dbReference type="EMBL" id="BX640422">
    <property type="protein sequence ID" value="CAE44026.1"/>
    <property type="status" value="ALT_INIT"/>
    <property type="molecule type" value="Genomic_DNA"/>
</dbReference>
<dbReference type="RefSeq" id="NP_882271.1">
    <property type="nucleotide sequence ID" value="NC_002929.2"/>
</dbReference>
<dbReference type="RefSeq" id="WP_003815795.1">
    <property type="nucleotide sequence ID" value="NZ_CP039022.1"/>
</dbReference>
<dbReference type="SMR" id="Q7VSY9"/>
<dbReference type="STRING" id="257313.BP3770"/>
<dbReference type="PaxDb" id="257313-BP3770"/>
<dbReference type="GeneID" id="93206066"/>
<dbReference type="KEGG" id="bpe:BP3770"/>
<dbReference type="PATRIC" id="fig|257313.5.peg.4074"/>
<dbReference type="eggNOG" id="COG0131">
    <property type="taxonomic scope" value="Bacteria"/>
</dbReference>
<dbReference type="HOGENOM" id="CLU_044308_3_0_4"/>
<dbReference type="UniPathway" id="UPA00031">
    <property type="reaction ID" value="UER00011"/>
</dbReference>
<dbReference type="Proteomes" id="UP000002676">
    <property type="component" value="Chromosome"/>
</dbReference>
<dbReference type="GO" id="GO:0005737">
    <property type="term" value="C:cytoplasm"/>
    <property type="evidence" value="ECO:0007669"/>
    <property type="project" value="UniProtKB-SubCell"/>
</dbReference>
<dbReference type="GO" id="GO:0004424">
    <property type="term" value="F:imidazoleglycerol-phosphate dehydratase activity"/>
    <property type="evidence" value="ECO:0007669"/>
    <property type="project" value="UniProtKB-UniRule"/>
</dbReference>
<dbReference type="GO" id="GO:0000105">
    <property type="term" value="P:L-histidine biosynthetic process"/>
    <property type="evidence" value="ECO:0007669"/>
    <property type="project" value="UniProtKB-UniRule"/>
</dbReference>
<dbReference type="CDD" id="cd07914">
    <property type="entry name" value="IGPD"/>
    <property type="match status" value="1"/>
</dbReference>
<dbReference type="FunFam" id="3.30.230.40:FF:000002">
    <property type="entry name" value="Imidazoleglycerol-phosphate dehydratase"/>
    <property type="match status" value="1"/>
</dbReference>
<dbReference type="FunFam" id="3.30.230.40:FF:000003">
    <property type="entry name" value="Imidazoleglycerol-phosphate dehydratase HisB"/>
    <property type="match status" value="1"/>
</dbReference>
<dbReference type="Gene3D" id="3.30.230.40">
    <property type="entry name" value="Imidazole glycerol phosphate dehydratase, domain 1"/>
    <property type="match status" value="2"/>
</dbReference>
<dbReference type="HAMAP" id="MF_00076">
    <property type="entry name" value="HisB"/>
    <property type="match status" value="1"/>
</dbReference>
<dbReference type="InterPro" id="IPR038494">
    <property type="entry name" value="IGPD_sf"/>
</dbReference>
<dbReference type="InterPro" id="IPR000807">
    <property type="entry name" value="ImidazoleglycerolP_deHydtase"/>
</dbReference>
<dbReference type="InterPro" id="IPR020565">
    <property type="entry name" value="ImidazoleglycerP_deHydtase_CS"/>
</dbReference>
<dbReference type="InterPro" id="IPR020568">
    <property type="entry name" value="Ribosomal_Su5_D2-typ_SF"/>
</dbReference>
<dbReference type="NCBIfam" id="NF002106">
    <property type="entry name" value="PRK00951.1-1"/>
    <property type="match status" value="1"/>
</dbReference>
<dbReference type="NCBIfam" id="NF002109">
    <property type="entry name" value="PRK00951.1-5"/>
    <property type="match status" value="1"/>
</dbReference>
<dbReference type="NCBIfam" id="NF002111">
    <property type="entry name" value="PRK00951.2-1"/>
    <property type="match status" value="1"/>
</dbReference>
<dbReference type="NCBIfam" id="NF002114">
    <property type="entry name" value="PRK00951.2-4"/>
    <property type="match status" value="1"/>
</dbReference>
<dbReference type="PANTHER" id="PTHR23133:SF2">
    <property type="entry name" value="IMIDAZOLEGLYCEROL-PHOSPHATE DEHYDRATASE"/>
    <property type="match status" value="1"/>
</dbReference>
<dbReference type="PANTHER" id="PTHR23133">
    <property type="entry name" value="IMIDAZOLEGLYCEROL-PHOSPHATE DEHYDRATASE HIS7"/>
    <property type="match status" value="1"/>
</dbReference>
<dbReference type="Pfam" id="PF00475">
    <property type="entry name" value="IGPD"/>
    <property type="match status" value="1"/>
</dbReference>
<dbReference type="SUPFAM" id="SSF54211">
    <property type="entry name" value="Ribosomal protein S5 domain 2-like"/>
    <property type="match status" value="2"/>
</dbReference>
<dbReference type="PROSITE" id="PS00954">
    <property type="entry name" value="IGP_DEHYDRATASE_1"/>
    <property type="match status" value="1"/>
</dbReference>
<dbReference type="PROSITE" id="PS00955">
    <property type="entry name" value="IGP_DEHYDRATASE_2"/>
    <property type="match status" value="1"/>
</dbReference>
<gene>
    <name evidence="1" type="primary">hisB</name>
    <name type="ordered locus">BP3770</name>
</gene>
<organism>
    <name type="scientific">Bordetella pertussis (strain Tohama I / ATCC BAA-589 / NCTC 13251)</name>
    <dbReference type="NCBI Taxonomy" id="257313"/>
    <lineage>
        <taxon>Bacteria</taxon>
        <taxon>Pseudomonadati</taxon>
        <taxon>Pseudomonadota</taxon>
        <taxon>Betaproteobacteria</taxon>
        <taxon>Burkholderiales</taxon>
        <taxon>Alcaligenaceae</taxon>
        <taxon>Bordetella</taxon>
    </lineage>
</organism>
<feature type="chain" id="PRO_0000158114" description="Imidazoleglycerol-phosphate dehydratase">
    <location>
        <begin position="1"/>
        <end position="195"/>
    </location>
</feature>
<comment type="catalytic activity">
    <reaction evidence="1">
        <text>D-erythro-1-(imidazol-4-yl)glycerol 3-phosphate = 3-(imidazol-4-yl)-2-oxopropyl phosphate + H2O</text>
        <dbReference type="Rhea" id="RHEA:11040"/>
        <dbReference type="ChEBI" id="CHEBI:15377"/>
        <dbReference type="ChEBI" id="CHEBI:57766"/>
        <dbReference type="ChEBI" id="CHEBI:58278"/>
        <dbReference type="EC" id="4.2.1.19"/>
    </reaction>
</comment>
<comment type="pathway">
    <text evidence="1">Amino-acid biosynthesis; L-histidine biosynthesis; L-histidine from 5-phospho-alpha-D-ribose 1-diphosphate: step 6/9.</text>
</comment>
<comment type="subcellular location">
    <subcellularLocation>
        <location evidence="1">Cytoplasm</location>
    </subcellularLocation>
</comment>
<comment type="similarity">
    <text evidence="1">Belongs to the imidazoleglycerol-phosphate dehydratase family.</text>
</comment>
<comment type="sequence caution" evidence="2">
    <conflict type="erroneous initiation">
        <sequence resource="EMBL-CDS" id="CAE44026"/>
    </conflict>
</comment>